<keyword id="KW-0067">ATP-binding</keyword>
<keyword id="KW-0436">Ligase</keyword>
<keyword id="KW-0547">Nucleotide-binding</keyword>
<keyword id="KW-0648">Protein biosynthesis</keyword>
<gene>
    <name type="primary">gatA</name>
</gene>
<organism>
    <name type="scientific">Moraxella catarrhalis</name>
    <name type="common">Branhamella catarrhalis</name>
    <dbReference type="NCBI Taxonomy" id="480"/>
    <lineage>
        <taxon>Bacteria</taxon>
        <taxon>Pseudomonadati</taxon>
        <taxon>Pseudomonadota</taxon>
        <taxon>Gammaproteobacteria</taxon>
        <taxon>Moraxellales</taxon>
        <taxon>Moraxellaceae</taxon>
        <taxon>Moraxella</taxon>
    </lineage>
</organism>
<name>GATA_MORCA</name>
<evidence type="ECO:0000250" key="1"/>
<evidence type="ECO:0000305" key="2"/>
<dbReference type="EC" id="6.3.5.7"/>
<dbReference type="EMBL" id="U49269">
    <property type="protein sequence ID" value="AAA92125.1"/>
    <property type="molecule type" value="Genomic_DNA"/>
</dbReference>
<dbReference type="RefSeq" id="WP_003668058.1">
    <property type="nucleotide sequence ID" value="NZ_CP010573.1"/>
</dbReference>
<dbReference type="SMR" id="Q49091"/>
<dbReference type="eggNOG" id="COG0154">
    <property type="taxonomic scope" value="Bacteria"/>
</dbReference>
<dbReference type="GO" id="GO:0030956">
    <property type="term" value="C:glutamyl-tRNA(Gln) amidotransferase complex"/>
    <property type="evidence" value="ECO:0007669"/>
    <property type="project" value="InterPro"/>
</dbReference>
<dbReference type="GO" id="GO:0005524">
    <property type="term" value="F:ATP binding"/>
    <property type="evidence" value="ECO:0007669"/>
    <property type="project" value="UniProtKB-KW"/>
</dbReference>
<dbReference type="GO" id="GO:0050567">
    <property type="term" value="F:glutaminyl-tRNA synthase (glutamine-hydrolyzing) activity"/>
    <property type="evidence" value="ECO:0007669"/>
    <property type="project" value="UniProtKB-UniRule"/>
</dbReference>
<dbReference type="GO" id="GO:0006412">
    <property type="term" value="P:translation"/>
    <property type="evidence" value="ECO:0007669"/>
    <property type="project" value="UniProtKB-UniRule"/>
</dbReference>
<dbReference type="Gene3D" id="3.90.1300.10">
    <property type="entry name" value="Amidase signature (AS) domain"/>
    <property type="match status" value="1"/>
</dbReference>
<dbReference type="HAMAP" id="MF_00120">
    <property type="entry name" value="GatA"/>
    <property type="match status" value="1"/>
</dbReference>
<dbReference type="InterPro" id="IPR000120">
    <property type="entry name" value="Amidase"/>
</dbReference>
<dbReference type="InterPro" id="IPR020556">
    <property type="entry name" value="Amidase_CS"/>
</dbReference>
<dbReference type="InterPro" id="IPR023631">
    <property type="entry name" value="Amidase_dom"/>
</dbReference>
<dbReference type="InterPro" id="IPR036928">
    <property type="entry name" value="AS_sf"/>
</dbReference>
<dbReference type="InterPro" id="IPR004412">
    <property type="entry name" value="GatA"/>
</dbReference>
<dbReference type="NCBIfam" id="TIGR00132">
    <property type="entry name" value="gatA"/>
    <property type="match status" value="1"/>
</dbReference>
<dbReference type="PANTHER" id="PTHR11895:SF151">
    <property type="entry name" value="GLUTAMYL-TRNA(GLN) AMIDOTRANSFERASE SUBUNIT A"/>
    <property type="match status" value="1"/>
</dbReference>
<dbReference type="PANTHER" id="PTHR11895">
    <property type="entry name" value="TRANSAMIDASE"/>
    <property type="match status" value="1"/>
</dbReference>
<dbReference type="Pfam" id="PF01425">
    <property type="entry name" value="Amidase"/>
    <property type="match status" value="1"/>
</dbReference>
<dbReference type="SUPFAM" id="SSF75304">
    <property type="entry name" value="Amidase signature (AS) enzymes"/>
    <property type="match status" value="1"/>
</dbReference>
<dbReference type="PROSITE" id="PS00571">
    <property type="entry name" value="AMIDASES"/>
    <property type="match status" value="1"/>
</dbReference>
<comment type="function">
    <text evidence="1">Allows the formation of correctly charged Gln-tRNA(Gln) through the transamidation of misacylated Glu-tRNA(Gln) in organisms which lack glutaminyl-tRNA synthetase. The reaction takes place in the presence of glutamine and ATP through an activated gamma-phospho-Glu-tRNA(Gln) (By similarity).</text>
</comment>
<comment type="catalytic activity">
    <reaction>
        <text>L-glutamyl-tRNA(Gln) + L-glutamine + ATP + H2O = L-glutaminyl-tRNA(Gln) + L-glutamate + ADP + phosphate + H(+)</text>
        <dbReference type="Rhea" id="RHEA:17521"/>
        <dbReference type="Rhea" id="RHEA-COMP:9681"/>
        <dbReference type="Rhea" id="RHEA-COMP:9684"/>
        <dbReference type="ChEBI" id="CHEBI:15377"/>
        <dbReference type="ChEBI" id="CHEBI:15378"/>
        <dbReference type="ChEBI" id="CHEBI:29985"/>
        <dbReference type="ChEBI" id="CHEBI:30616"/>
        <dbReference type="ChEBI" id="CHEBI:43474"/>
        <dbReference type="ChEBI" id="CHEBI:58359"/>
        <dbReference type="ChEBI" id="CHEBI:78520"/>
        <dbReference type="ChEBI" id="CHEBI:78521"/>
        <dbReference type="ChEBI" id="CHEBI:456216"/>
        <dbReference type="EC" id="6.3.5.7"/>
    </reaction>
</comment>
<comment type="subunit">
    <text evidence="1">Heterotrimer of A, B and C subunits.</text>
</comment>
<comment type="similarity">
    <text evidence="2">Belongs to the amidase family. GatA subfamily.</text>
</comment>
<reference key="1">
    <citation type="submission" date="1996-03" db="EMBL/GenBank/DDBJ databases">
        <title>The Moraxella (Branhamella) catarrhalis chromosomal beta-lactamase gene is flanked by an amidase gene and a conserved gene of unknown function.</title>
        <authorList>
            <person name="Beaulieu D."/>
            <person name="Piche L."/>
            <person name="Parr T.R. Jr."/>
            <person name="Roeger-Lawry K."/>
            <person name="Rosteck P."/>
            <person name="Roy P.H."/>
        </authorList>
    </citation>
    <scope>NUCLEOTIDE SEQUENCE [GENOMIC DNA]</scope>
    <source>
        <strain>ATCC 53879 / E22</strain>
    </source>
</reference>
<proteinExistence type="inferred from homology"/>
<feature type="chain" id="PRO_0000105176" description="Glutamyl-tRNA(Gln) amidotransferase subunit A">
    <location>
        <begin position="1"/>
        <end position="492"/>
    </location>
</feature>
<feature type="active site" description="Charge relay system" evidence="1">
    <location>
        <position position="79"/>
    </location>
</feature>
<feature type="active site" description="Charge relay system" evidence="1">
    <location>
        <position position="154"/>
    </location>
</feature>
<feature type="active site" description="Acyl-ester intermediate" evidence="1">
    <location>
        <position position="178"/>
    </location>
</feature>
<accession>Q49091</accession>
<protein>
    <recommendedName>
        <fullName>Glutamyl-tRNA(Gln) amidotransferase subunit A</fullName>
        <shortName>Glu-ADT subunit A</shortName>
        <ecNumber>6.3.5.7</ecNumber>
    </recommendedName>
</protein>
<sequence>MTDLHHLSVHELADGLKNKQFSSHELVEHFANRINRLDGQINSFITKDFDNALAQAKLADKLRAKGDNRPLLGVPMAHKDNLCTKGVLTTAGSKMLYNFVSPYDATVVDSIANSGFVSLGKLNMDEFAMGSDNESSYFGAVHNPWDVQRVPGGSSGGSAAAVAAGFVPVATGSDTGGSIRQPASFCGITGIKPTYGRVSRYGMIAYASSLDQAGTFGKSALDCAYLLAPMAGYDPKDATSINRPSEDYVADILATKTDGKPLAGKKIGVAKAYFGAGLDSEVEKSIRTALAKYEELGAKIVEVDITDPAITLATYYLLAPAEASSNLSRYDGVRFGYRCENPKDLHDLYTRSRSEGFGAEVQRRIIMGTYALSAGYFDAYYTKAQKVRRLIVDDFKKAFEKCDIIASPTAPTPAYKLGESLDPASIYLLDVYTIGVNLAGLPALSHPVGQANGLPVGLQLISKHWAESELLKTAHIYQSHTDFHQAKADLVK</sequence>